<sequence>MALYEHVLLARQDISQQQVDALVEQFKGVLEANGGKFGKVENWGLRPLTYRIKKNRKAYYTLVNIDAPAAAVAEMERQMRINEDVLSFLTVRVEEHEEGQSAMLTRRDDRRERDGDDRPRRREGGFDRGDRGDRGPRRPRDNEAGEGA</sequence>
<reference key="1">
    <citation type="journal article" date="2002" name="Proc. Natl. Acad. Sci. U.S.A.">
        <title>The genome sequence of the facultative intracellular pathogen Brucella melitensis.</title>
        <authorList>
            <person name="DelVecchio V.G."/>
            <person name="Kapatral V."/>
            <person name="Redkar R.J."/>
            <person name="Patra G."/>
            <person name="Mujer C."/>
            <person name="Los T."/>
            <person name="Ivanova N."/>
            <person name="Anderson I."/>
            <person name="Bhattacharyya A."/>
            <person name="Lykidis A."/>
            <person name="Reznik G."/>
            <person name="Jablonski L."/>
            <person name="Larsen N."/>
            <person name="D'Souza M."/>
            <person name="Bernal A."/>
            <person name="Mazur M."/>
            <person name="Goltsman E."/>
            <person name="Selkov E."/>
            <person name="Elzer P.H."/>
            <person name="Hagius S."/>
            <person name="O'Callaghan D."/>
            <person name="Letesson J.-J."/>
            <person name="Haselkorn R."/>
            <person name="Kyrpides N.C."/>
            <person name="Overbeek R."/>
        </authorList>
    </citation>
    <scope>NUCLEOTIDE SEQUENCE [LARGE SCALE GENOMIC DNA]</scope>
    <source>
        <strain>ATCC 23456 / CCUG 17765 / NCTC 10094 / 16M</strain>
    </source>
</reference>
<dbReference type="EMBL" id="AE008917">
    <property type="protein sequence ID" value="AAL52661.1"/>
    <property type="molecule type" value="Genomic_DNA"/>
</dbReference>
<dbReference type="PIR" id="AB3437">
    <property type="entry name" value="AB3437"/>
</dbReference>
<dbReference type="RefSeq" id="WP_004683108.1">
    <property type="nucleotide sequence ID" value="NZ_GG703778.1"/>
</dbReference>
<dbReference type="SMR" id="Q8YFP0"/>
<dbReference type="GeneID" id="29594328"/>
<dbReference type="KEGG" id="bme:BMEI1480"/>
<dbReference type="KEGG" id="bmel:DK63_2010"/>
<dbReference type="PATRIC" id="fig|224914.52.peg.2112"/>
<dbReference type="eggNOG" id="COG0360">
    <property type="taxonomic scope" value="Bacteria"/>
</dbReference>
<dbReference type="PhylomeDB" id="Q8YFP0"/>
<dbReference type="Proteomes" id="UP000000419">
    <property type="component" value="Chromosome I"/>
</dbReference>
<dbReference type="GO" id="GO:0022627">
    <property type="term" value="C:cytosolic small ribosomal subunit"/>
    <property type="evidence" value="ECO:0007669"/>
    <property type="project" value="TreeGrafter"/>
</dbReference>
<dbReference type="GO" id="GO:0070181">
    <property type="term" value="F:small ribosomal subunit rRNA binding"/>
    <property type="evidence" value="ECO:0007669"/>
    <property type="project" value="TreeGrafter"/>
</dbReference>
<dbReference type="GO" id="GO:0003735">
    <property type="term" value="F:structural constituent of ribosome"/>
    <property type="evidence" value="ECO:0007669"/>
    <property type="project" value="InterPro"/>
</dbReference>
<dbReference type="GO" id="GO:0006412">
    <property type="term" value="P:translation"/>
    <property type="evidence" value="ECO:0007669"/>
    <property type="project" value="UniProtKB-UniRule"/>
</dbReference>
<dbReference type="CDD" id="cd00473">
    <property type="entry name" value="bS6"/>
    <property type="match status" value="1"/>
</dbReference>
<dbReference type="Gene3D" id="3.30.70.60">
    <property type="match status" value="1"/>
</dbReference>
<dbReference type="HAMAP" id="MF_00360">
    <property type="entry name" value="Ribosomal_bS6"/>
    <property type="match status" value="1"/>
</dbReference>
<dbReference type="InterPro" id="IPR000529">
    <property type="entry name" value="Ribosomal_bS6"/>
</dbReference>
<dbReference type="InterPro" id="IPR035980">
    <property type="entry name" value="Ribosomal_bS6_sf"/>
</dbReference>
<dbReference type="InterPro" id="IPR020814">
    <property type="entry name" value="Ribosomal_S6_plastid/chlpt"/>
</dbReference>
<dbReference type="InterPro" id="IPR014717">
    <property type="entry name" value="Transl_elong_EF1B/ribsomal_bS6"/>
</dbReference>
<dbReference type="NCBIfam" id="TIGR00166">
    <property type="entry name" value="S6"/>
    <property type="match status" value="1"/>
</dbReference>
<dbReference type="PANTHER" id="PTHR21011">
    <property type="entry name" value="MITOCHONDRIAL 28S RIBOSOMAL PROTEIN S6"/>
    <property type="match status" value="1"/>
</dbReference>
<dbReference type="PANTHER" id="PTHR21011:SF1">
    <property type="entry name" value="SMALL RIBOSOMAL SUBUNIT PROTEIN BS6M"/>
    <property type="match status" value="1"/>
</dbReference>
<dbReference type="Pfam" id="PF01250">
    <property type="entry name" value="Ribosomal_S6"/>
    <property type="match status" value="1"/>
</dbReference>
<dbReference type="SUPFAM" id="SSF54995">
    <property type="entry name" value="Ribosomal protein S6"/>
    <property type="match status" value="1"/>
</dbReference>
<accession>Q8YFP0</accession>
<evidence type="ECO:0000255" key="1">
    <source>
        <dbReference type="HAMAP-Rule" id="MF_00360"/>
    </source>
</evidence>
<evidence type="ECO:0000256" key="2">
    <source>
        <dbReference type="SAM" id="MobiDB-lite"/>
    </source>
</evidence>
<evidence type="ECO:0000305" key="3"/>
<name>RS6_BRUME</name>
<protein>
    <recommendedName>
        <fullName evidence="1">Small ribosomal subunit protein bS6</fullName>
    </recommendedName>
    <alternativeName>
        <fullName evidence="3">30S ribosomal protein S6</fullName>
    </alternativeName>
</protein>
<keyword id="KW-0687">Ribonucleoprotein</keyword>
<keyword id="KW-0689">Ribosomal protein</keyword>
<keyword id="KW-0694">RNA-binding</keyword>
<keyword id="KW-0699">rRNA-binding</keyword>
<feature type="chain" id="PRO_0000176738" description="Small ribosomal subunit protein bS6">
    <location>
        <begin position="1"/>
        <end position="148"/>
    </location>
</feature>
<feature type="region of interest" description="Disordered" evidence="2">
    <location>
        <begin position="96"/>
        <end position="148"/>
    </location>
</feature>
<proteinExistence type="inferred from homology"/>
<organism>
    <name type="scientific">Brucella melitensis biotype 1 (strain ATCC 23456 / CCUG 17765 / NCTC 10094 / 16M)</name>
    <dbReference type="NCBI Taxonomy" id="224914"/>
    <lineage>
        <taxon>Bacteria</taxon>
        <taxon>Pseudomonadati</taxon>
        <taxon>Pseudomonadota</taxon>
        <taxon>Alphaproteobacteria</taxon>
        <taxon>Hyphomicrobiales</taxon>
        <taxon>Brucellaceae</taxon>
        <taxon>Brucella/Ochrobactrum group</taxon>
        <taxon>Brucella</taxon>
    </lineage>
</organism>
<comment type="function">
    <text evidence="1">Binds together with bS18 to 16S ribosomal RNA.</text>
</comment>
<comment type="similarity">
    <text evidence="1">Belongs to the bacterial ribosomal protein bS6 family.</text>
</comment>
<gene>
    <name evidence="1" type="primary">rpsF</name>
    <name type="ordered locus">BMEI1480</name>
</gene>